<protein>
    <recommendedName>
        <fullName evidence="1">Orotate phosphoribosyltransferase</fullName>
        <shortName evidence="1">OPRT</shortName>
        <shortName evidence="1">OPRTase</shortName>
        <ecNumber evidence="1">2.4.2.10</ecNumber>
    </recommendedName>
</protein>
<evidence type="ECO:0000255" key="1">
    <source>
        <dbReference type="HAMAP-Rule" id="MF_01208"/>
    </source>
</evidence>
<name>PYRE_STRPB</name>
<comment type="function">
    <text evidence="1">Catalyzes the transfer of a ribosyl phosphate group from 5-phosphoribose 1-diphosphate to orotate, leading to the formation of orotidine monophosphate (OMP).</text>
</comment>
<comment type="catalytic activity">
    <reaction evidence="1">
        <text>orotidine 5'-phosphate + diphosphate = orotate + 5-phospho-alpha-D-ribose 1-diphosphate</text>
        <dbReference type="Rhea" id="RHEA:10380"/>
        <dbReference type="ChEBI" id="CHEBI:30839"/>
        <dbReference type="ChEBI" id="CHEBI:33019"/>
        <dbReference type="ChEBI" id="CHEBI:57538"/>
        <dbReference type="ChEBI" id="CHEBI:58017"/>
        <dbReference type="EC" id="2.4.2.10"/>
    </reaction>
</comment>
<comment type="cofactor">
    <cofactor evidence="1">
        <name>Mg(2+)</name>
        <dbReference type="ChEBI" id="CHEBI:18420"/>
    </cofactor>
</comment>
<comment type="pathway">
    <text evidence="1">Pyrimidine metabolism; UMP biosynthesis via de novo pathway; UMP from orotate: step 1/2.</text>
</comment>
<comment type="subunit">
    <text evidence="1">Homodimer.</text>
</comment>
<comment type="similarity">
    <text evidence="1">Belongs to the purine/pyrimidine phosphoribosyltransferase family. PyrE subfamily.</text>
</comment>
<gene>
    <name evidence="1" type="primary">pyrE</name>
    <name type="ordered locus">MGAS2096_Spy0776</name>
</gene>
<dbReference type="EC" id="2.4.2.10" evidence="1"/>
<dbReference type="EMBL" id="CP000261">
    <property type="protein sequence ID" value="ABF35828.1"/>
    <property type="molecule type" value="Genomic_DNA"/>
</dbReference>
<dbReference type="SMR" id="Q1JC80"/>
<dbReference type="KEGG" id="spj:MGAS2096_Spy0776"/>
<dbReference type="HOGENOM" id="CLU_074878_1_1_9"/>
<dbReference type="UniPathway" id="UPA00070">
    <property type="reaction ID" value="UER00119"/>
</dbReference>
<dbReference type="GO" id="GO:0000287">
    <property type="term" value="F:magnesium ion binding"/>
    <property type="evidence" value="ECO:0007669"/>
    <property type="project" value="UniProtKB-UniRule"/>
</dbReference>
<dbReference type="GO" id="GO:0004588">
    <property type="term" value="F:orotate phosphoribosyltransferase activity"/>
    <property type="evidence" value="ECO:0007669"/>
    <property type="project" value="UniProtKB-UniRule"/>
</dbReference>
<dbReference type="GO" id="GO:0044205">
    <property type="term" value="P:'de novo' UMP biosynthetic process"/>
    <property type="evidence" value="ECO:0007669"/>
    <property type="project" value="UniProtKB-UniRule"/>
</dbReference>
<dbReference type="GO" id="GO:0019856">
    <property type="term" value="P:pyrimidine nucleobase biosynthetic process"/>
    <property type="evidence" value="ECO:0007669"/>
    <property type="project" value="TreeGrafter"/>
</dbReference>
<dbReference type="CDD" id="cd06223">
    <property type="entry name" value="PRTases_typeI"/>
    <property type="match status" value="1"/>
</dbReference>
<dbReference type="Gene3D" id="3.40.50.2020">
    <property type="match status" value="1"/>
</dbReference>
<dbReference type="HAMAP" id="MF_01208">
    <property type="entry name" value="PyrE"/>
    <property type="match status" value="1"/>
</dbReference>
<dbReference type="InterPro" id="IPR023031">
    <property type="entry name" value="OPRT"/>
</dbReference>
<dbReference type="InterPro" id="IPR004467">
    <property type="entry name" value="Or_phspho_trans_dom"/>
</dbReference>
<dbReference type="InterPro" id="IPR000836">
    <property type="entry name" value="PRibTrfase_dom"/>
</dbReference>
<dbReference type="InterPro" id="IPR029057">
    <property type="entry name" value="PRTase-like"/>
</dbReference>
<dbReference type="NCBIfam" id="TIGR00336">
    <property type="entry name" value="pyrE"/>
    <property type="match status" value="1"/>
</dbReference>
<dbReference type="PANTHER" id="PTHR19278">
    <property type="entry name" value="OROTATE PHOSPHORIBOSYLTRANSFERASE"/>
    <property type="match status" value="1"/>
</dbReference>
<dbReference type="PANTHER" id="PTHR19278:SF9">
    <property type="entry name" value="URIDINE 5'-MONOPHOSPHATE SYNTHASE"/>
    <property type="match status" value="1"/>
</dbReference>
<dbReference type="Pfam" id="PF00156">
    <property type="entry name" value="Pribosyltran"/>
    <property type="match status" value="1"/>
</dbReference>
<dbReference type="SUPFAM" id="SSF53271">
    <property type="entry name" value="PRTase-like"/>
    <property type="match status" value="1"/>
</dbReference>
<dbReference type="PROSITE" id="PS00103">
    <property type="entry name" value="PUR_PYR_PR_TRANSFER"/>
    <property type="match status" value="1"/>
</dbReference>
<feature type="chain" id="PRO_1000066307" description="Orotate phosphoribosyltransferase">
    <location>
        <begin position="1"/>
        <end position="209"/>
    </location>
</feature>
<feature type="binding site" evidence="1">
    <location>
        <position position="96"/>
    </location>
    <ligand>
        <name>5-phospho-alpha-D-ribose 1-diphosphate</name>
        <dbReference type="ChEBI" id="CHEBI:58017"/>
        <note>ligand shared between dimeric partners</note>
    </ligand>
</feature>
<feature type="binding site" evidence="1">
    <location>
        <position position="100"/>
    </location>
    <ligand>
        <name>5-phospho-alpha-D-ribose 1-diphosphate</name>
        <dbReference type="ChEBI" id="CHEBI:58017"/>
        <note>ligand shared between dimeric partners</note>
    </ligand>
</feature>
<feature type="binding site" evidence="1">
    <location>
        <position position="102"/>
    </location>
    <ligand>
        <name>5-phospho-alpha-D-ribose 1-diphosphate</name>
        <dbReference type="ChEBI" id="CHEBI:58017"/>
        <note>ligand shared between dimeric partners</note>
    </ligand>
</feature>
<feature type="binding site" description="in other chain" evidence="1">
    <location>
        <begin position="122"/>
        <end position="130"/>
    </location>
    <ligand>
        <name>5-phospho-alpha-D-ribose 1-diphosphate</name>
        <dbReference type="ChEBI" id="CHEBI:58017"/>
        <note>ligand shared between dimeric partners</note>
    </ligand>
</feature>
<feature type="binding site" evidence="1">
    <location>
        <position position="126"/>
    </location>
    <ligand>
        <name>orotate</name>
        <dbReference type="ChEBI" id="CHEBI:30839"/>
    </ligand>
</feature>
<keyword id="KW-0328">Glycosyltransferase</keyword>
<keyword id="KW-0460">Magnesium</keyword>
<keyword id="KW-0665">Pyrimidine biosynthesis</keyword>
<keyword id="KW-0808">Transferase</keyword>
<reference key="1">
    <citation type="journal article" date="2006" name="Proc. Natl. Acad. Sci. U.S.A.">
        <title>Molecular genetic anatomy of inter- and intraserotype variation in the human bacterial pathogen group A Streptococcus.</title>
        <authorList>
            <person name="Beres S.B."/>
            <person name="Richter E.W."/>
            <person name="Nagiec M.J."/>
            <person name="Sumby P."/>
            <person name="Porcella S.F."/>
            <person name="DeLeo F.R."/>
            <person name="Musser J.M."/>
        </authorList>
    </citation>
    <scope>NUCLEOTIDE SEQUENCE [LARGE SCALE GENOMIC DNA]</scope>
    <source>
        <strain>MGAS2096</strain>
    </source>
</reference>
<sequence>MTLASQIATQLLDIKAVYLKPEDPFTWASGIKSPIYTDNRVTLSYPKTRDLIENGFVETIRAHFPEVEVIAGTATAGIPHGAIIADKMTLPFVYIRSKPKDHGAGNQIEGRVLKGQKMVIIEDLISTGGSVLDAAAAASREGADVLGVVAIFTYELPKASQNFKEAGIKLITLSNYTELIAVAKLQGYITNDGLHLLKKFKEDQVNWQQ</sequence>
<organism>
    <name type="scientific">Streptococcus pyogenes serotype M12 (strain MGAS2096)</name>
    <dbReference type="NCBI Taxonomy" id="370553"/>
    <lineage>
        <taxon>Bacteria</taxon>
        <taxon>Bacillati</taxon>
        <taxon>Bacillota</taxon>
        <taxon>Bacilli</taxon>
        <taxon>Lactobacillales</taxon>
        <taxon>Streptococcaceae</taxon>
        <taxon>Streptococcus</taxon>
    </lineage>
</organism>
<proteinExistence type="inferred from homology"/>
<accession>Q1JC80</accession>